<organism>
    <name type="scientific">Anaplasma marginale (strain St. Maries)</name>
    <dbReference type="NCBI Taxonomy" id="234826"/>
    <lineage>
        <taxon>Bacteria</taxon>
        <taxon>Pseudomonadati</taxon>
        <taxon>Pseudomonadota</taxon>
        <taxon>Alphaproteobacteria</taxon>
        <taxon>Rickettsiales</taxon>
        <taxon>Anaplasmataceae</taxon>
        <taxon>Anaplasma</taxon>
    </lineage>
</organism>
<dbReference type="EMBL" id="CP000030">
    <property type="protein sequence ID" value="AAV86810.1"/>
    <property type="molecule type" value="Genomic_DNA"/>
</dbReference>
<dbReference type="SMR" id="Q5PA70"/>
<dbReference type="KEGG" id="ama:AM899"/>
<dbReference type="HOGENOM" id="CLU_061015_2_1_5"/>
<dbReference type="GO" id="GO:1990904">
    <property type="term" value="C:ribonucleoprotein complex"/>
    <property type="evidence" value="ECO:0007669"/>
    <property type="project" value="UniProtKB-KW"/>
</dbReference>
<dbReference type="GO" id="GO:0005840">
    <property type="term" value="C:ribosome"/>
    <property type="evidence" value="ECO:0007669"/>
    <property type="project" value="UniProtKB-KW"/>
</dbReference>
<dbReference type="GO" id="GO:0019843">
    <property type="term" value="F:rRNA binding"/>
    <property type="evidence" value="ECO:0007669"/>
    <property type="project" value="UniProtKB-UniRule"/>
</dbReference>
<dbReference type="GO" id="GO:0003735">
    <property type="term" value="F:structural constituent of ribosome"/>
    <property type="evidence" value="ECO:0007669"/>
    <property type="project" value="InterPro"/>
</dbReference>
<dbReference type="GO" id="GO:0000049">
    <property type="term" value="F:tRNA binding"/>
    <property type="evidence" value="ECO:0007669"/>
    <property type="project" value="UniProtKB-UniRule"/>
</dbReference>
<dbReference type="GO" id="GO:0006412">
    <property type="term" value="P:translation"/>
    <property type="evidence" value="ECO:0007669"/>
    <property type="project" value="UniProtKB-UniRule"/>
</dbReference>
<dbReference type="FunFam" id="3.30.1440.10:FF:000001">
    <property type="entry name" value="50S ribosomal protein L5"/>
    <property type="match status" value="1"/>
</dbReference>
<dbReference type="Gene3D" id="3.30.1440.10">
    <property type="match status" value="1"/>
</dbReference>
<dbReference type="HAMAP" id="MF_01333_B">
    <property type="entry name" value="Ribosomal_uL5_B"/>
    <property type="match status" value="1"/>
</dbReference>
<dbReference type="InterPro" id="IPR002132">
    <property type="entry name" value="Ribosomal_uL5"/>
</dbReference>
<dbReference type="InterPro" id="IPR020930">
    <property type="entry name" value="Ribosomal_uL5_bac-type"/>
</dbReference>
<dbReference type="InterPro" id="IPR031309">
    <property type="entry name" value="Ribosomal_uL5_C"/>
</dbReference>
<dbReference type="InterPro" id="IPR022803">
    <property type="entry name" value="Ribosomal_uL5_dom_sf"/>
</dbReference>
<dbReference type="InterPro" id="IPR031310">
    <property type="entry name" value="Ribosomal_uL5_N"/>
</dbReference>
<dbReference type="NCBIfam" id="NF000585">
    <property type="entry name" value="PRK00010.1"/>
    <property type="match status" value="1"/>
</dbReference>
<dbReference type="PANTHER" id="PTHR11994">
    <property type="entry name" value="60S RIBOSOMAL PROTEIN L11-RELATED"/>
    <property type="match status" value="1"/>
</dbReference>
<dbReference type="Pfam" id="PF00281">
    <property type="entry name" value="Ribosomal_L5"/>
    <property type="match status" value="1"/>
</dbReference>
<dbReference type="Pfam" id="PF00673">
    <property type="entry name" value="Ribosomal_L5_C"/>
    <property type="match status" value="1"/>
</dbReference>
<dbReference type="PIRSF" id="PIRSF002161">
    <property type="entry name" value="Ribosomal_L5"/>
    <property type="match status" value="1"/>
</dbReference>
<dbReference type="SUPFAM" id="SSF55282">
    <property type="entry name" value="RL5-like"/>
    <property type="match status" value="1"/>
</dbReference>
<reference key="1">
    <citation type="journal article" date="2005" name="Proc. Natl. Acad. Sci. U.S.A.">
        <title>Complete genome sequencing of Anaplasma marginale reveals that the surface is skewed to two superfamilies of outer membrane proteins.</title>
        <authorList>
            <person name="Brayton K.A."/>
            <person name="Kappmeyer L.S."/>
            <person name="Herndon D.R."/>
            <person name="Dark M.J."/>
            <person name="Tibbals D.L."/>
            <person name="Palmer G.H."/>
            <person name="McGuire T.C."/>
            <person name="Knowles D.P. Jr."/>
        </authorList>
    </citation>
    <scope>NUCLEOTIDE SEQUENCE [LARGE SCALE GENOMIC DNA]</scope>
    <source>
        <strain>St. Maries</strain>
    </source>
</reference>
<comment type="function">
    <text evidence="1">This is one of the proteins that bind and probably mediate the attachment of the 5S RNA into the large ribosomal subunit, where it forms part of the central protuberance. In the 70S ribosome it contacts protein S13 of the 30S subunit (bridge B1b), connecting the 2 subunits; this bridge is implicated in subunit movement. Contacts the P site tRNA; the 5S rRNA and some of its associated proteins might help stabilize positioning of ribosome-bound tRNAs.</text>
</comment>
<comment type="subunit">
    <text evidence="1">Part of the 50S ribosomal subunit; part of the 5S rRNA/L5/L18/L25 subcomplex. Contacts the 5S rRNA and the P site tRNA. Forms a bridge to the 30S subunit in the 70S ribosome.</text>
</comment>
<comment type="similarity">
    <text evidence="1">Belongs to the universal ribosomal protein uL5 family.</text>
</comment>
<accession>Q5PA70</accession>
<name>RL5_ANAMM</name>
<proteinExistence type="inferred from homology"/>
<sequence>MYMLGSLCKEAVAQSLMSKLGCSSVMQVPKVVKVCLNMGIGIGAMDSKVMDSCSRDLALISAQKPVVTRARRSIAGFKIRKGFPIGCMVTLRGKKMYEFLDRLINIALPRERDFKGLSMSQFDGHGNISFGVKEHISFLEVDYDKIDKVRGFDVSVVTTAKSDYDAKALLTELGFPFVN</sequence>
<evidence type="ECO:0000255" key="1">
    <source>
        <dbReference type="HAMAP-Rule" id="MF_01333"/>
    </source>
</evidence>
<evidence type="ECO:0000305" key="2"/>
<protein>
    <recommendedName>
        <fullName evidence="1">Large ribosomal subunit protein uL5</fullName>
    </recommendedName>
    <alternativeName>
        <fullName evidence="2">50S ribosomal protein L5</fullName>
    </alternativeName>
</protein>
<keyword id="KW-0687">Ribonucleoprotein</keyword>
<keyword id="KW-0689">Ribosomal protein</keyword>
<keyword id="KW-0694">RNA-binding</keyword>
<keyword id="KW-0699">rRNA-binding</keyword>
<keyword id="KW-0820">tRNA-binding</keyword>
<feature type="chain" id="PRO_0000242961" description="Large ribosomal subunit protein uL5">
    <location>
        <begin position="1"/>
        <end position="179"/>
    </location>
</feature>
<gene>
    <name evidence="1" type="primary">rplE</name>
    <name type="ordered locus">AM899</name>
</gene>